<keyword id="KW-0963">Cytoplasm</keyword>
<keyword id="KW-0489">Methyltransferase</keyword>
<keyword id="KW-0694">RNA-binding</keyword>
<keyword id="KW-0698">rRNA processing</keyword>
<keyword id="KW-0949">S-adenosyl-L-methionine</keyword>
<keyword id="KW-0808">Transferase</keyword>
<protein>
    <recommendedName>
        <fullName evidence="1">Ribosomal RNA large subunit methyltransferase K/L</fullName>
    </recommendedName>
    <domain>
        <recommendedName>
            <fullName evidence="1">23S rRNA m2G2445 methyltransferase</fullName>
            <ecNumber evidence="1">2.1.1.173</ecNumber>
        </recommendedName>
        <alternativeName>
            <fullName evidence="1">rRNA (guanine-N(2)-)-methyltransferase RlmL</fullName>
        </alternativeName>
    </domain>
    <domain>
        <recommendedName>
            <fullName evidence="1">23S rRNA m7G2069 methyltransferase</fullName>
            <ecNumber evidence="1">2.1.1.264</ecNumber>
        </recommendedName>
        <alternativeName>
            <fullName evidence="1">rRNA (guanine-N(7)-)-methyltransferase RlmK</fullName>
        </alternativeName>
    </domain>
</protein>
<name>RLMKL_YERP3</name>
<sequence length="706" mass="79374">MNSLFASTARGLEELLKSELEALGAHDCKIVQGGVHFQGDDRLMYQSLLWSRLASRILLPLNEFKVYSDLDLYLGVQAIDWPSIFGVDKTFAVHFSGVNDEIRNSQYGALKVKDAIVDSFTRKMDQRPTVAKQQPDIRVNVFLQRDMASVALDLSGEGLHQRGYRDLTGQAPLKENLAAAIIQRSGWQPGTPMVDPMCGSGTLLIEAAMMASDRAPGLHRGHWGFTAWNAFNEALWRELTTEAQVRARRGLLETSSRFFGSDIDRRVIEMARANARRAGVAELITFNANDISKLVNPLPEGPVGTVISNPPYGERLESEPALIALHNMFGRMMKTAFGGWRLSLFSASPELLSCLQLRADREFKAKNGPLDCVQKNYQLTANPQGAGGALVAEDYANRLRKNVKKLDKWAKQQGIECYRLYDADLPDYNVAVDRYGSKVVVQEYAPPKTIDPQKARQRLFDVINATLAVLELPSNQLVLKTRERQKGKNQYEKLAQKGEFLLVSEYNAKLWVNLTDYLDTGLFLDHRIARQMLGKMSQGKDFLNLFAYTGTASVHAGLGGARSTTTVDMSRTYLEWAEKNLRANGLTGQQHRLIQADCLSWLSNTDEQFDVIFIDPPTFSNSKRMETTFDVQRDHLVLMKELKRLLRRKGTIMFSNNKRGFQMDLAGIAALGLEAKEITALTQSEDFARNRQIHNCWLVTHSQEEK</sequence>
<organism>
    <name type="scientific">Yersinia pseudotuberculosis serotype O:1b (strain IP 31758)</name>
    <dbReference type="NCBI Taxonomy" id="349747"/>
    <lineage>
        <taxon>Bacteria</taxon>
        <taxon>Pseudomonadati</taxon>
        <taxon>Pseudomonadota</taxon>
        <taxon>Gammaproteobacteria</taxon>
        <taxon>Enterobacterales</taxon>
        <taxon>Yersiniaceae</taxon>
        <taxon>Yersinia</taxon>
    </lineage>
</organism>
<gene>
    <name evidence="1" type="primary">rlmL</name>
    <name type="ordered locus">YpsIP31758_2552</name>
</gene>
<evidence type="ECO:0000255" key="1">
    <source>
        <dbReference type="HAMAP-Rule" id="MF_01858"/>
    </source>
</evidence>
<proteinExistence type="inferred from homology"/>
<comment type="function">
    <text evidence="1">Specifically methylates the guanine in position 2445 (m2G2445) and the guanine in position 2069 (m7G2069) of 23S rRNA.</text>
</comment>
<comment type="catalytic activity">
    <reaction evidence="1">
        <text>guanosine(2445) in 23S rRNA + S-adenosyl-L-methionine = N(2)-methylguanosine(2445) in 23S rRNA + S-adenosyl-L-homocysteine + H(+)</text>
        <dbReference type="Rhea" id="RHEA:42740"/>
        <dbReference type="Rhea" id="RHEA-COMP:10215"/>
        <dbReference type="Rhea" id="RHEA-COMP:10216"/>
        <dbReference type="ChEBI" id="CHEBI:15378"/>
        <dbReference type="ChEBI" id="CHEBI:57856"/>
        <dbReference type="ChEBI" id="CHEBI:59789"/>
        <dbReference type="ChEBI" id="CHEBI:74269"/>
        <dbReference type="ChEBI" id="CHEBI:74481"/>
        <dbReference type="EC" id="2.1.1.173"/>
    </reaction>
</comment>
<comment type="catalytic activity">
    <reaction evidence="1">
        <text>guanosine(2069) in 23S rRNA + S-adenosyl-L-methionine = N(2)-methylguanosine(2069) in 23S rRNA + S-adenosyl-L-homocysteine + H(+)</text>
        <dbReference type="Rhea" id="RHEA:43772"/>
        <dbReference type="Rhea" id="RHEA-COMP:10688"/>
        <dbReference type="Rhea" id="RHEA-COMP:10689"/>
        <dbReference type="ChEBI" id="CHEBI:15378"/>
        <dbReference type="ChEBI" id="CHEBI:57856"/>
        <dbReference type="ChEBI" id="CHEBI:59789"/>
        <dbReference type="ChEBI" id="CHEBI:74269"/>
        <dbReference type="ChEBI" id="CHEBI:74481"/>
        <dbReference type="EC" id="2.1.1.264"/>
    </reaction>
</comment>
<comment type="subcellular location">
    <subcellularLocation>
        <location evidence="1">Cytoplasm</location>
    </subcellularLocation>
</comment>
<comment type="similarity">
    <text evidence="1">Belongs to the methyltransferase superfamily. RlmKL family.</text>
</comment>
<feature type="chain" id="PRO_0000366873" description="Ribosomal RNA large subunit methyltransferase K/L">
    <location>
        <begin position="1"/>
        <end position="706"/>
    </location>
</feature>
<feature type="domain" description="THUMP" evidence="1">
    <location>
        <begin position="43"/>
        <end position="154"/>
    </location>
</feature>
<accession>A7FJT9</accession>
<reference key="1">
    <citation type="journal article" date="2007" name="PLoS Genet.">
        <title>The complete genome sequence of Yersinia pseudotuberculosis IP31758, the causative agent of Far East scarlet-like fever.</title>
        <authorList>
            <person name="Eppinger M."/>
            <person name="Rosovitz M.J."/>
            <person name="Fricke W.F."/>
            <person name="Rasko D.A."/>
            <person name="Kokorina G."/>
            <person name="Fayolle C."/>
            <person name="Lindler L.E."/>
            <person name="Carniel E."/>
            <person name="Ravel J."/>
        </authorList>
    </citation>
    <scope>NUCLEOTIDE SEQUENCE [LARGE SCALE GENOMIC DNA]</scope>
    <source>
        <strain>IP 31758</strain>
    </source>
</reference>
<dbReference type="EC" id="2.1.1.173" evidence="1"/>
<dbReference type="EC" id="2.1.1.264" evidence="1"/>
<dbReference type="EMBL" id="CP000720">
    <property type="protein sequence ID" value="ABS49145.1"/>
    <property type="molecule type" value="Genomic_DNA"/>
</dbReference>
<dbReference type="SMR" id="A7FJT9"/>
<dbReference type="KEGG" id="ypi:YpsIP31758_2552"/>
<dbReference type="HOGENOM" id="CLU_014042_2_0_6"/>
<dbReference type="Proteomes" id="UP000002412">
    <property type="component" value="Chromosome"/>
</dbReference>
<dbReference type="GO" id="GO:0005737">
    <property type="term" value="C:cytoplasm"/>
    <property type="evidence" value="ECO:0007669"/>
    <property type="project" value="UniProtKB-SubCell"/>
</dbReference>
<dbReference type="GO" id="GO:0052915">
    <property type="term" value="F:23S rRNA (guanine(2445)-N(2))-methyltransferase activity"/>
    <property type="evidence" value="ECO:0007669"/>
    <property type="project" value="UniProtKB-UniRule"/>
</dbReference>
<dbReference type="GO" id="GO:0003723">
    <property type="term" value="F:RNA binding"/>
    <property type="evidence" value="ECO:0007669"/>
    <property type="project" value="UniProtKB-KW"/>
</dbReference>
<dbReference type="GO" id="GO:0070043">
    <property type="term" value="F:rRNA (guanine-N7-)-methyltransferase activity"/>
    <property type="evidence" value="ECO:0007669"/>
    <property type="project" value="UniProtKB-UniRule"/>
</dbReference>
<dbReference type="CDD" id="cd02440">
    <property type="entry name" value="AdoMet_MTases"/>
    <property type="match status" value="2"/>
</dbReference>
<dbReference type="CDD" id="cd11715">
    <property type="entry name" value="THUMP_AdoMetMT"/>
    <property type="match status" value="1"/>
</dbReference>
<dbReference type="FunFam" id="3.30.750.80:FF:000001">
    <property type="entry name" value="Ribosomal RNA large subunit methyltransferase K/L"/>
    <property type="match status" value="1"/>
</dbReference>
<dbReference type="FunFam" id="3.40.50.150:FF:000039">
    <property type="entry name" value="Ribosomal RNA large subunit methyltransferase K/L"/>
    <property type="match status" value="1"/>
</dbReference>
<dbReference type="Gene3D" id="3.30.2130.30">
    <property type="match status" value="1"/>
</dbReference>
<dbReference type="Gene3D" id="3.30.750.80">
    <property type="entry name" value="RNA methyltransferase domain (HRMD) like"/>
    <property type="match status" value="1"/>
</dbReference>
<dbReference type="Gene3D" id="3.40.50.150">
    <property type="entry name" value="Vaccinia Virus protein VP39"/>
    <property type="match status" value="2"/>
</dbReference>
<dbReference type="HAMAP" id="MF_01858">
    <property type="entry name" value="23SrRNA_methyltr_KL"/>
    <property type="match status" value="1"/>
</dbReference>
<dbReference type="InterPro" id="IPR017244">
    <property type="entry name" value="23SrRNA_methyltr_KL"/>
</dbReference>
<dbReference type="InterPro" id="IPR002052">
    <property type="entry name" value="DNA_methylase_N6_adenine_CS"/>
</dbReference>
<dbReference type="InterPro" id="IPR000241">
    <property type="entry name" value="RlmKL-like_Mtase"/>
</dbReference>
<dbReference type="InterPro" id="IPR053943">
    <property type="entry name" value="RlmKL-like_Mtase_CS"/>
</dbReference>
<dbReference type="InterPro" id="IPR054170">
    <property type="entry name" value="RlmL_1st"/>
</dbReference>
<dbReference type="InterPro" id="IPR019614">
    <property type="entry name" value="SAM-dep_methyl-trfase"/>
</dbReference>
<dbReference type="InterPro" id="IPR029063">
    <property type="entry name" value="SAM-dependent_MTases_sf"/>
</dbReference>
<dbReference type="InterPro" id="IPR004114">
    <property type="entry name" value="THUMP_dom"/>
</dbReference>
<dbReference type="NCBIfam" id="NF008748">
    <property type="entry name" value="PRK11783.1"/>
    <property type="match status" value="1"/>
</dbReference>
<dbReference type="PANTHER" id="PTHR47313">
    <property type="entry name" value="RIBOSOMAL RNA LARGE SUBUNIT METHYLTRANSFERASE K/L"/>
    <property type="match status" value="1"/>
</dbReference>
<dbReference type="PANTHER" id="PTHR47313:SF1">
    <property type="entry name" value="RIBOSOMAL RNA LARGE SUBUNIT METHYLTRANSFERASE K_L"/>
    <property type="match status" value="1"/>
</dbReference>
<dbReference type="Pfam" id="PF10672">
    <property type="entry name" value="Methyltrans_SAM"/>
    <property type="match status" value="1"/>
</dbReference>
<dbReference type="Pfam" id="PF22020">
    <property type="entry name" value="RlmL_1st"/>
    <property type="match status" value="1"/>
</dbReference>
<dbReference type="Pfam" id="PF02926">
    <property type="entry name" value="THUMP"/>
    <property type="match status" value="1"/>
</dbReference>
<dbReference type="Pfam" id="PF01170">
    <property type="entry name" value="UPF0020"/>
    <property type="match status" value="1"/>
</dbReference>
<dbReference type="PIRSF" id="PIRSF037618">
    <property type="entry name" value="RNA_Mtase_bacteria_prd"/>
    <property type="match status" value="1"/>
</dbReference>
<dbReference type="SMART" id="SM00981">
    <property type="entry name" value="THUMP"/>
    <property type="match status" value="1"/>
</dbReference>
<dbReference type="SUPFAM" id="SSF53335">
    <property type="entry name" value="S-adenosyl-L-methionine-dependent methyltransferases"/>
    <property type="match status" value="2"/>
</dbReference>
<dbReference type="PROSITE" id="PS51165">
    <property type="entry name" value="THUMP"/>
    <property type="match status" value="1"/>
</dbReference>
<dbReference type="PROSITE" id="PS01261">
    <property type="entry name" value="UPF0020"/>
    <property type="match status" value="1"/>
</dbReference>